<comment type="function">
    <text>TS is a member of the terpene cyclase group of enzymes. It catalyzes the isomerization and cyclization of farnesyl pyro-phosphate to form trichodiene, the first cyclic intermediate in the biosynthetic pathway for trichothecenes. It serves to branch trichothecene biosynthesis from the isoprenoid pathway.</text>
</comment>
<comment type="catalytic activity">
    <reaction>
        <text>(2E,6E)-farnesyl diphosphate = trichodiene + diphosphate</text>
        <dbReference type="Rhea" id="RHEA:12052"/>
        <dbReference type="ChEBI" id="CHEBI:15861"/>
        <dbReference type="ChEBI" id="CHEBI:33019"/>
        <dbReference type="ChEBI" id="CHEBI:175763"/>
        <dbReference type="EC" id="4.2.3.6"/>
    </reaction>
</comment>
<comment type="pathway">
    <text>Sesquiterpene biosynthesis; trichothecene biosynthesis.</text>
</comment>
<comment type="miscellaneous">
    <text>Trichothecenes are sesquiterpenoid toxins that act by inhibiting protein biosynthesis.</text>
</comment>
<comment type="similarity">
    <text evidence="1">Belongs to the trichodiene synthase family.</text>
</comment>
<feature type="chain" id="PRO_0000221573" description="Trichodiene synthase">
    <location>
        <begin position="1"/>
        <end position="375"/>
    </location>
</feature>
<accession>Q7LJR6</accession>
<protein>
    <recommendedName>
        <fullName>Trichodiene synthase</fullName>
        <ecNumber>4.2.3.6</ecNumber>
    </recommendedName>
    <alternativeName>
        <fullName>Sesquiterpene cyclase</fullName>
        <shortName>TS</shortName>
    </alternativeName>
</protein>
<dbReference type="EC" id="4.2.3.6"/>
<dbReference type="EMBL" id="AY102576">
    <property type="protein sequence ID" value="AAM48822.1"/>
    <property type="molecule type" value="Genomic_DNA"/>
</dbReference>
<dbReference type="EMBL" id="AY102577">
    <property type="protein sequence ID" value="AAM48830.1"/>
    <property type="molecule type" value="Genomic_DNA"/>
</dbReference>
<dbReference type="EMBL" id="AY102578">
    <property type="protein sequence ID" value="AAM48838.1"/>
    <property type="molecule type" value="Genomic_DNA"/>
</dbReference>
<dbReference type="SMR" id="Q7LJR6"/>
<dbReference type="UniPathway" id="UPA00267"/>
<dbReference type="GO" id="GO:0045482">
    <property type="term" value="F:trichodiene synthase activity"/>
    <property type="evidence" value="ECO:0007669"/>
    <property type="project" value="UniProtKB-EC"/>
</dbReference>
<dbReference type="GO" id="GO:0016106">
    <property type="term" value="P:sesquiterpenoid biosynthetic process"/>
    <property type="evidence" value="ECO:0007669"/>
    <property type="project" value="InterPro"/>
</dbReference>
<dbReference type="Gene3D" id="1.10.600.10">
    <property type="entry name" value="Farnesyl Diphosphate Synthase"/>
    <property type="match status" value="1"/>
</dbReference>
<dbReference type="InterPro" id="IPR008949">
    <property type="entry name" value="Isoprenoid_synthase_dom_sf"/>
</dbReference>
<dbReference type="InterPro" id="IPR010458">
    <property type="entry name" value="TRI5_ascomyc"/>
</dbReference>
<dbReference type="InterPro" id="IPR024652">
    <property type="entry name" value="Trichodiene_synth"/>
</dbReference>
<dbReference type="Pfam" id="PF06330">
    <property type="entry name" value="TRI5"/>
    <property type="match status" value="1"/>
</dbReference>
<dbReference type="PIRSF" id="PIRSF001388">
    <property type="entry name" value="TRI5"/>
    <property type="match status" value="1"/>
</dbReference>
<dbReference type="SFLD" id="SFLDS00005">
    <property type="entry name" value="Isoprenoid_Synthase_Type_I"/>
    <property type="match status" value="1"/>
</dbReference>
<dbReference type="SFLD" id="SFLDG01021">
    <property type="entry name" value="Trichodiene_Synthase_Like"/>
    <property type="match status" value="1"/>
</dbReference>
<dbReference type="SUPFAM" id="SSF48576">
    <property type="entry name" value="Terpenoid synthases"/>
    <property type="match status" value="1"/>
</dbReference>
<name>TRI5_FUSAC</name>
<gene>
    <name type="primary">TRI5</name>
</gene>
<proteinExistence type="inferred from homology"/>
<keyword id="KW-0456">Lyase</keyword>
<sequence length="375" mass="43952">MENFPTEYFLNTSVRLLEYIRYRDSNYTREERIENLHYAYNKAAHHFAQPRQQKMLKVDPKRLQASLQTIVGMVVYSWAKVSKECMADLSIHYTYTLVLDDSSDDPHPAMLNYFDDLQAGREQAHPWWALVNEHFPNVLRHFGPFCSLNLIRSTMDFFEGCWIEQYNFGGFPGSDDYPQFLRRMNGLGHCVGASLWPKDLFDERKHFLEITSAVAQMENWMVWVNDLMSFYKEFDDERDQISLVKNFVTCHEITLDEALEKLTQETLHSSKQMVAVFSDKDPQVMDTIECFMHGYVTWHLCDARYRLHEIYEKVKDQDTEDAKKFCKFFEQAANVGAVAPSEWAYPQVAQLANVRAKDDVKEAHKPILSSIELVE</sequence>
<reference key="1">
    <citation type="journal article" date="2002" name="Proc. Natl. Acad. Sci. U.S.A.">
        <title>Ancestral polymorphism and adaptive evolution in the trichothecene mycotoxin gene cluster of phytopathogenic Fusarium.</title>
        <authorList>
            <person name="Ward T.J."/>
            <person name="Bielawski J.P."/>
            <person name="Kistler H.C."/>
            <person name="Sullivan E."/>
            <person name="O'Donnell K."/>
        </authorList>
    </citation>
    <scope>NUCLEOTIDE SEQUENCE [GENOMIC DNA]</scope>
    <source>
        <strain>CBS 110253 / MRC 2458 / NRRL 26752</strain>
        <strain>CBS 110254 / MRC 5120 / NRRL 26754</strain>
        <strain>CBS 110255 / MRC 5122 / NRRL 26755</strain>
    </source>
</reference>
<evidence type="ECO:0000305" key="1"/>
<organism>
    <name type="scientific">Fusarium acaciae-mearnsii</name>
    <dbReference type="NCBI Taxonomy" id="282272"/>
    <lineage>
        <taxon>Eukaryota</taxon>
        <taxon>Fungi</taxon>
        <taxon>Dikarya</taxon>
        <taxon>Ascomycota</taxon>
        <taxon>Pezizomycotina</taxon>
        <taxon>Sordariomycetes</taxon>
        <taxon>Hypocreomycetidae</taxon>
        <taxon>Hypocreales</taxon>
        <taxon>Nectriaceae</taxon>
        <taxon>Fusarium</taxon>
    </lineage>
</organism>